<sequence length="810" mass="90600">MAMKKLLIASLLFSSATVYGAEGFVVKDIHFEGLQRVAVGAALLSMPVRTGDTVNDEDISNTIRALFATGNFEDVRVLRDGNTLLVQVKERPTIASITFSGNKSVKDDMLKQNLEASGVRVGESLDRTTLSDIEKGLEDFYYSVGKYSASVKAVVTPLPRNRVDLKLVFQEGVSAKIQQINIVGNHAFSTEELISHFQLRDEVPWWNVVGDRKYQKQKLAGDLETLRSYYLDRGYARFNIDSTQVSLTPDKKGIYITVNITEGDQYKLSGVQVSGNLAGHSAEIEKLTKIEPGELYNGTKVTKMEDDIKKLLGRYGYAYPRVQSQPEINDADKTVKLRVNVDAGNRFYVRKIRFEGNDTSKDSVLRREMRQMEGAWLGSDLVDQGKERLNRLGFFETVDTDTQRVPGSPDQVDVVYKVKERNTGSFNFGIGYGTESGVSFQAGVQQDNWLGTGYSVGINGTKNDYQTYSELSVTNPYFTVDGVSLGGRIFYNDFQADDADLSDYTNKSYGTDVTLGFPINEYNTLRAGLGYVHNSLSNMEPQVAMWRYLASMGQYPSTNDQDNSFSTDDFTFNYGWTYNKLDRGYFPTEGTRINLTGKVTIPGSDNEYYKATLDTATYVPIDNDHKWVILGRTRFGYGDGLGGKEMPFYENFYAGGSSTVRGFQSNTIGPKAVYYPYNPKNYDADEDYDCATQDGAKDMCKSDDAVGGNAMAVASLEFITPTPFISEKYANSVRTSFFWDMGTVWDTNWDSSQYSGYPDYSDPSNIRMSAGIALQWMSPLGPLVFSYAQPFKKYDGDKAEQFQFNIGKTW</sequence>
<evidence type="ECO:0000255" key="1">
    <source>
        <dbReference type="HAMAP-Rule" id="MF_01430"/>
    </source>
</evidence>
<evidence type="ECO:0000255" key="2">
    <source>
        <dbReference type="PROSITE-ProRule" id="PRU01115"/>
    </source>
</evidence>
<reference key="1">
    <citation type="journal article" date="2008" name="Genome Res.">
        <title>Comparative genome analysis of Salmonella enteritidis PT4 and Salmonella gallinarum 287/91 provides insights into evolutionary and host adaptation pathways.</title>
        <authorList>
            <person name="Thomson N.R."/>
            <person name="Clayton D.J."/>
            <person name="Windhorst D."/>
            <person name="Vernikos G."/>
            <person name="Davidson S."/>
            <person name="Churcher C."/>
            <person name="Quail M.A."/>
            <person name="Stevens M."/>
            <person name="Jones M.A."/>
            <person name="Watson M."/>
            <person name="Barron A."/>
            <person name="Layton A."/>
            <person name="Pickard D."/>
            <person name="Kingsley R.A."/>
            <person name="Bignell A."/>
            <person name="Clark L."/>
            <person name="Harris B."/>
            <person name="Ormond D."/>
            <person name="Abdellah Z."/>
            <person name="Brooks K."/>
            <person name="Cherevach I."/>
            <person name="Chillingworth T."/>
            <person name="Woodward J."/>
            <person name="Norberczak H."/>
            <person name="Lord A."/>
            <person name="Arrowsmith C."/>
            <person name="Jagels K."/>
            <person name="Moule S."/>
            <person name="Mungall K."/>
            <person name="Saunders M."/>
            <person name="Whitehead S."/>
            <person name="Chabalgoity J.A."/>
            <person name="Maskell D."/>
            <person name="Humphreys T."/>
            <person name="Roberts M."/>
            <person name="Barrow P.A."/>
            <person name="Dougan G."/>
            <person name="Parkhill J."/>
        </authorList>
    </citation>
    <scope>NUCLEOTIDE SEQUENCE [LARGE SCALE GENOMIC DNA]</scope>
    <source>
        <strain>287/91 / NCTC 13346</strain>
    </source>
</reference>
<gene>
    <name evidence="1" type="primary">bamA</name>
    <name type="synonym">yaeT</name>
    <name type="ordered locus">SG0228</name>
</gene>
<comment type="function">
    <text evidence="1">Part of the outer membrane protein assembly complex, which is involved in assembly and insertion of beta-barrel proteins into the outer membrane. Constitutes, with BamD, the core component of the assembly machinery.</text>
</comment>
<comment type="subunit">
    <text evidence="1">Part of the Bam complex, which is composed of the outer membrane protein BamA, and four lipoproteins BamB, BamC, BamD and BamE.</text>
</comment>
<comment type="subcellular location">
    <subcellularLocation>
        <location evidence="1">Cell outer membrane</location>
    </subcellularLocation>
</comment>
<comment type="similarity">
    <text evidence="1">Belongs to the BamA family.</text>
</comment>
<accession>B5RHG2</accession>
<name>BAMA_SALG2</name>
<feature type="signal peptide" evidence="1">
    <location>
        <begin position="1"/>
        <end position="20"/>
    </location>
</feature>
<feature type="chain" id="PRO_5000398663" description="Outer membrane protein assembly factor BamA">
    <location>
        <begin position="21"/>
        <end position="810"/>
    </location>
</feature>
<feature type="domain" description="POTRA 1" evidence="2">
    <location>
        <begin position="24"/>
        <end position="91"/>
    </location>
</feature>
<feature type="domain" description="POTRA 2" evidence="2">
    <location>
        <begin position="92"/>
        <end position="172"/>
    </location>
</feature>
<feature type="domain" description="POTRA 3" evidence="2">
    <location>
        <begin position="175"/>
        <end position="263"/>
    </location>
</feature>
<feature type="domain" description="POTRA 4" evidence="2">
    <location>
        <begin position="266"/>
        <end position="344"/>
    </location>
</feature>
<feature type="domain" description="POTRA 5" evidence="2">
    <location>
        <begin position="347"/>
        <end position="421"/>
    </location>
</feature>
<protein>
    <recommendedName>
        <fullName evidence="1">Outer membrane protein assembly factor BamA</fullName>
    </recommendedName>
</protein>
<keyword id="KW-0998">Cell outer membrane</keyword>
<keyword id="KW-0472">Membrane</keyword>
<keyword id="KW-0677">Repeat</keyword>
<keyword id="KW-0732">Signal</keyword>
<keyword id="KW-0812">Transmembrane</keyword>
<keyword id="KW-1134">Transmembrane beta strand</keyword>
<organism>
    <name type="scientific">Salmonella gallinarum (strain 287/91 / NCTC 13346)</name>
    <dbReference type="NCBI Taxonomy" id="550538"/>
    <lineage>
        <taxon>Bacteria</taxon>
        <taxon>Pseudomonadati</taxon>
        <taxon>Pseudomonadota</taxon>
        <taxon>Gammaproteobacteria</taxon>
        <taxon>Enterobacterales</taxon>
        <taxon>Enterobacteriaceae</taxon>
        <taxon>Salmonella</taxon>
    </lineage>
</organism>
<proteinExistence type="inferred from homology"/>
<dbReference type="EMBL" id="AM933173">
    <property type="protein sequence ID" value="CAR36135.1"/>
    <property type="molecule type" value="Genomic_DNA"/>
</dbReference>
<dbReference type="RefSeq" id="WP_001240931.1">
    <property type="nucleotide sequence ID" value="NC_011274.1"/>
</dbReference>
<dbReference type="SMR" id="B5RHG2"/>
<dbReference type="KEGG" id="seg:SG0228"/>
<dbReference type="HOGENOM" id="CLU_007664_1_0_6"/>
<dbReference type="Proteomes" id="UP000008321">
    <property type="component" value="Chromosome"/>
</dbReference>
<dbReference type="GO" id="GO:1990063">
    <property type="term" value="C:Bam protein complex"/>
    <property type="evidence" value="ECO:0007669"/>
    <property type="project" value="TreeGrafter"/>
</dbReference>
<dbReference type="GO" id="GO:0043165">
    <property type="term" value="P:Gram-negative-bacterium-type cell outer membrane assembly"/>
    <property type="evidence" value="ECO:0007669"/>
    <property type="project" value="UniProtKB-UniRule"/>
</dbReference>
<dbReference type="GO" id="GO:0051205">
    <property type="term" value="P:protein insertion into membrane"/>
    <property type="evidence" value="ECO:0007669"/>
    <property type="project" value="UniProtKB-UniRule"/>
</dbReference>
<dbReference type="FunFam" id="2.40.160.50:FF:000001">
    <property type="entry name" value="Outer membrane protein assembly factor BamA"/>
    <property type="match status" value="1"/>
</dbReference>
<dbReference type="FunFam" id="3.10.20.310:FF:000001">
    <property type="entry name" value="Outer membrane protein assembly factor BamA"/>
    <property type="match status" value="1"/>
</dbReference>
<dbReference type="FunFam" id="3.10.20.310:FF:000002">
    <property type="entry name" value="Outer membrane protein assembly factor BamA"/>
    <property type="match status" value="1"/>
</dbReference>
<dbReference type="FunFam" id="3.10.20.310:FF:000003">
    <property type="entry name" value="Outer membrane protein assembly factor BamA"/>
    <property type="match status" value="1"/>
</dbReference>
<dbReference type="FunFam" id="3.10.20.310:FF:000004">
    <property type="entry name" value="Outer membrane protein assembly factor BamA"/>
    <property type="match status" value="1"/>
</dbReference>
<dbReference type="FunFam" id="3.10.20.310:FF:000005">
    <property type="entry name" value="Outer membrane protein assembly factor BamA"/>
    <property type="match status" value="1"/>
</dbReference>
<dbReference type="Gene3D" id="3.10.20.310">
    <property type="entry name" value="membrane protein fhac"/>
    <property type="match status" value="5"/>
</dbReference>
<dbReference type="Gene3D" id="2.40.160.50">
    <property type="entry name" value="membrane protein fhac: a member of the omp85/tpsb transporter family"/>
    <property type="match status" value="1"/>
</dbReference>
<dbReference type="HAMAP" id="MF_01430">
    <property type="entry name" value="OM_assembly_BamA"/>
    <property type="match status" value="1"/>
</dbReference>
<dbReference type="InterPro" id="IPR000184">
    <property type="entry name" value="Bac_surfAg_D15"/>
</dbReference>
<dbReference type="InterPro" id="IPR010827">
    <property type="entry name" value="BamA/TamA_POTRA"/>
</dbReference>
<dbReference type="InterPro" id="IPR039910">
    <property type="entry name" value="D15-like"/>
</dbReference>
<dbReference type="InterPro" id="IPR023707">
    <property type="entry name" value="OM_assembly_BamA"/>
</dbReference>
<dbReference type="InterPro" id="IPR034746">
    <property type="entry name" value="POTRA"/>
</dbReference>
<dbReference type="NCBIfam" id="TIGR03303">
    <property type="entry name" value="OM_YaeT"/>
    <property type="match status" value="1"/>
</dbReference>
<dbReference type="NCBIfam" id="NF008287">
    <property type="entry name" value="PRK11067.1"/>
    <property type="match status" value="1"/>
</dbReference>
<dbReference type="PANTHER" id="PTHR12815:SF23">
    <property type="entry name" value="OUTER MEMBRANE PROTEIN ASSEMBLY FACTOR BAMA"/>
    <property type="match status" value="1"/>
</dbReference>
<dbReference type="PANTHER" id="PTHR12815">
    <property type="entry name" value="SORTING AND ASSEMBLY MACHINERY SAMM50 PROTEIN FAMILY MEMBER"/>
    <property type="match status" value="1"/>
</dbReference>
<dbReference type="Pfam" id="PF01103">
    <property type="entry name" value="Omp85"/>
    <property type="match status" value="1"/>
</dbReference>
<dbReference type="Pfam" id="PF07244">
    <property type="entry name" value="POTRA"/>
    <property type="match status" value="4"/>
</dbReference>
<dbReference type="PIRSF" id="PIRSF006076">
    <property type="entry name" value="OM_assembly_OMP85"/>
    <property type="match status" value="1"/>
</dbReference>
<dbReference type="PROSITE" id="PS51779">
    <property type="entry name" value="POTRA"/>
    <property type="match status" value="5"/>
</dbReference>